<feature type="chain" id="PRO_1000009748" description="dCTP deaminase">
    <location>
        <begin position="1"/>
        <end position="184"/>
    </location>
</feature>
<feature type="active site" description="Proton donor/acceptor" evidence="1">
    <location>
        <position position="133"/>
    </location>
</feature>
<feature type="binding site" evidence="1">
    <location>
        <begin position="107"/>
        <end position="112"/>
    </location>
    <ligand>
        <name>dCTP</name>
        <dbReference type="ChEBI" id="CHEBI:61481"/>
    </ligand>
</feature>
<feature type="binding site" evidence="1">
    <location>
        <begin position="131"/>
        <end position="133"/>
    </location>
    <ligand>
        <name>dCTP</name>
        <dbReference type="ChEBI" id="CHEBI:61481"/>
    </ligand>
</feature>
<feature type="binding site" evidence="1">
    <location>
        <position position="152"/>
    </location>
    <ligand>
        <name>dCTP</name>
        <dbReference type="ChEBI" id="CHEBI:61481"/>
    </ligand>
</feature>
<feature type="binding site" evidence="1">
    <location>
        <position position="166"/>
    </location>
    <ligand>
        <name>dCTP</name>
        <dbReference type="ChEBI" id="CHEBI:61481"/>
    </ligand>
</feature>
<feature type="binding site" evidence="1">
    <location>
        <position position="176"/>
    </location>
    <ligand>
        <name>dCTP</name>
        <dbReference type="ChEBI" id="CHEBI:61481"/>
    </ligand>
</feature>
<comment type="function">
    <text evidence="1">Catalyzes the deamination of dCTP to dUTP.</text>
</comment>
<comment type="catalytic activity">
    <reaction evidence="1">
        <text>dCTP + H2O + H(+) = dUTP + NH4(+)</text>
        <dbReference type="Rhea" id="RHEA:22680"/>
        <dbReference type="ChEBI" id="CHEBI:15377"/>
        <dbReference type="ChEBI" id="CHEBI:15378"/>
        <dbReference type="ChEBI" id="CHEBI:28938"/>
        <dbReference type="ChEBI" id="CHEBI:61481"/>
        <dbReference type="ChEBI" id="CHEBI:61555"/>
        <dbReference type="EC" id="3.5.4.13"/>
    </reaction>
</comment>
<comment type="pathway">
    <text evidence="1">Pyrimidine metabolism; dUMP biosynthesis; dUMP from dCTP (dUTP route): step 1/2.</text>
</comment>
<comment type="subunit">
    <text evidence="1">Homotrimer.</text>
</comment>
<comment type="similarity">
    <text evidence="1">Belongs to the dCTP deaminase family.</text>
</comment>
<protein>
    <recommendedName>
        <fullName evidence="1">dCTP deaminase</fullName>
        <ecNumber evidence="1">3.5.4.13</ecNumber>
    </recommendedName>
    <alternativeName>
        <fullName evidence="1">Deoxycytidine triphosphate deaminase</fullName>
    </alternativeName>
</protein>
<proteinExistence type="inferred from homology"/>
<evidence type="ECO:0000255" key="1">
    <source>
        <dbReference type="HAMAP-Rule" id="MF_00146"/>
    </source>
</evidence>
<name>DCD_PARM1</name>
<keyword id="KW-0378">Hydrolase</keyword>
<keyword id="KW-0546">Nucleotide metabolism</keyword>
<keyword id="KW-0547">Nucleotide-binding</keyword>
<organism>
    <name type="scientific">Paramagnetospirillum magneticum (strain ATCC 700264 / AMB-1)</name>
    <name type="common">Magnetospirillum magneticum</name>
    <dbReference type="NCBI Taxonomy" id="342108"/>
    <lineage>
        <taxon>Bacteria</taxon>
        <taxon>Pseudomonadati</taxon>
        <taxon>Pseudomonadota</taxon>
        <taxon>Alphaproteobacteria</taxon>
        <taxon>Rhodospirillales</taxon>
        <taxon>Magnetospirillaceae</taxon>
        <taxon>Paramagnetospirillum</taxon>
    </lineage>
</organism>
<gene>
    <name evidence="1" type="primary">dcd</name>
    <name type="ordered locus">amb1527</name>
</gene>
<accession>Q2W744</accession>
<dbReference type="EC" id="3.5.4.13" evidence="1"/>
<dbReference type="EMBL" id="AP007255">
    <property type="protein sequence ID" value="BAE50331.1"/>
    <property type="molecule type" value="Genomic_DNA"/>
</dbReference>
<dbReference type="RefSeq" id="WP_011383937.1">
    <property type="nucleotide sequence ID" value="NC_007626.1"/>
</dbReference>
<dbReference type="SMR" id="Q2W744"/>
<dbReference type="STRING" id="342108.amb1527"/>
<dbReference type="KEGG" id="mag:amb1527"/>
<dbReference type="HOGENOM" id="CLU_087476_4_0_5"/>
<dbReference type="OrthoDB" id="9780956at2"/>
<dbReference type="UniPathway" id="UPA00610">
    <property type="reaction ID" value="UER00665"/>
</dbReference>
<dbReference type="Proteomes" id="UP000007058">
    <property type="component" value="Chromosome"/>
</dbReference>
<dbReference type="GO" id="GO:0008829">
    <property type="term" value="F:dCTP deaminase activity"/>
    <property type="evidence" value="ECO:0007669"/>
    <property type="project" value="UniProtKB-UniRule"/>
</dbReference>
<dbReference type="GO" id="GO:0000166">
    <property type="term" value="F:nucleotide binding"/>
    <property type="evidence" value="ECO:0007669"/>
    <property type="project" value="UniProtKB-KW"/>
</dbReference>
<dbReference type="GO" id="GO:0006226">
    <property type="term" value="P:dUMP biosynthetic process"/>
    <property type="evidence" value="ECO:0007669"/>
    <property type="project" value="UniProtKB-UniPathway"/>
</dbReference>
<dbReference type="GO" id="GO:0006229">
    <property type="term" value="P:dUTP biosynthetic process"/>
    <property type="evidence" value="ECO:0007669"/>
    <property type="project" value="UniProtKB-UniRule"/>
</dbReference>
<dbReference type="CDD" id="cd07557">
    <property type="entry name" value="trimeric_dUTPase"/>
    <property type="match status" value="1"/>
</dbReference>
<dbReference type="FunFam" id="2.70.40.10:FF:000001">
    <property type="entry name" value="dCTP deaminase"/>
    <property type="match status" value="1"/>
</dbReference>
<dbReference type="Gene3D" id="2.70.40.10">
    <property type="match status" value="1"/>
</dbReference>
<dbReference type="HAMAP" id="MF_00146">
    <property type="entry name" value="dCTP_deaminase"/>
    <property type="match status" value="1"/>
</dbReference>
<dbReference type="InterPro" id="IPR011962">
    <property type="entry name" value="dCTP_deaminase"/>
</dbReference>
<dbReference type="InterPro" id="IPR036157">
    <property type="entry name" value="dUTPase-like_sf"/>
</dbReference>
<dbReference type="InterPro" id="IPR033704">
    <property type="entry name" value="dUTPase_trimeric"/>
</dbReference>
<dbReference type="NCBIfam" id="TIGR02274">
    <property type="entry name" value="dCTP_deam"/>
    <property type="match status" value="1"/>
</dbReference>
<dbReference type="PANTHER" id="PTHR42680">
    <property type="entry name" value="DCTP DEAMINASE"/>
    <property type="match status" value="1"/>
</dbReference>
<dbReference type="PANTHER" id="PTHR42680:SF3">
    <property type="entry name" value="DCTP DEAMINASE"/>
    <property type="match status" value="1"/>
</dbReference>
<dbReference type="Pfam" id="PF22769">
    <property type="entry name" value="DCD"/>
    <property type="match status" value="1"/>
</dbReference>
<dbReference type="SUPFAM" id="SSF51283">
    <property type="entry name" value="dUTPase-like"/>
    <property type="match status" value="1"/>
</dbReference>
<sequence length="184" mass="20492">MSVMPDTWIREMAKTKGMIEPFTEKQQRAGVISYGVSSYGYDARVSREFKIFTNVDSAVVDPKSFSPNSLVDRETDICVIPPNSFALARTVEYFRIPRDVLVICLGKSTYARCGIIVNVTPLEPEWEGHVTLEFSNTTPLPAKIYAGEGACQFIFLKGDTVCETSYADRSGKYQGQQGVTLPRL</sequence>
<reference key="1">
    <citation type="journal article" date="2005" name="DNA Res.">
        <title>Complete genome sequence of the facultative anaerobic magnetotactic bacterium Magnetospirillum sp. strain AMB-1.</title>
        <authorList>
            <person name="Matsunaga T."/>
            <person name="Okamura Y."/>
            <person name="Fukuda Y."/>
            <person name="Wahyudi A.T."/>
            <person name="Murase Y."/>
            <person name="Takeyama H."/>
        </authorList>
    </citation>
    <scope>NUCLEOTIDE SEQUENCE [LARGE SCALE GENOMIC DNA]</scope>
    <source>
        <strain>ATCC 700264 / AMB-1</strain>
    </source>
</reference>